<proteinExistence type="inferred from homology"/>
<evidence type="ECO:0000255" key="1">
    <source>
        <dbReference type="HAMAP-Rule" id="MF_00303"/>
    </source>
</evidence>
<evidence type="ECO:0000256" key="2">
    <source>
        <dbReference type="SAM" id="MobiDB-lite"/>
    </source>
</evidence>
<organism>
    <name type="scientific">Rhodococcus erythropolis (strain PR4 / NBRC 100887)</name>
    <dbReference type="NCBI Taxonomy" id="234621"/>
    <lineage>
        <taxon>Bacteria</taxon>
        <taxon>Bacillati</taxon>
        <taxon>Actinomycetota</taxon>
        <taxon>Actinomycetes</taxon>
        <taxon>Mycobacteriales</taxon>
        <taxon>Nocardiaceae</taxon>
        <taxon>Rhodococcus</taxon>
        <taxon>Rhodococcus erythropolis group</taxon>
    </lineage>
</organism>
<accession>C1A1N9</accession>
<keyword id="KW-0131">Cell cycle</keyword>
<keyword id="KW-0132">Cell division</keyword>
<keyword id="KW-0143">Chaperone</keyword>
<keyword id="KW-0963">Cytoplasm</keyword>
<keyword id="KW-0413">Isomerase</keyword>
<keyword id="KW-0697">Rotamase</keyword>
<name>TIG_RHOE4</name>
<dbReference type="EC" id="5.2.1.8" evidence="1"/>
<dbReference type="EMBL" id="AP008957">
    <property type="protein sequence ID" value="BAH34524.1"/>
    <property type="molecule type" value="Genomic_DNA"/>
</dbReference>
<dbReference type="RefSeq" id="WP_019749086.1">
    <property type="nucleotide sequence ID" value="NC_012490.1"/>
</dbReference>
<dbReference type="SMR" id="C1A1N9"/>
<dbReference type="GeneID" id="57486279"/>
<dbReference type="KEGG" id="rer:RER_38160"/>
<dbReference type="eggNOG" id="COG0544">
    <property type="taxonomic scope" value="Bacteria"/>
</dbReference>
<dbReference type="HOGENOM" id="CLU_033058_3_0_11"/>
<dbReference type="Proteomes" id="UP000002204">
    <property type="component" value="Chromosome"/>
</dbReference>
<dbReference type="GO" id="GO:0005737">
    <property type="term" value="C:cytoplasm"/>
    <property type="evidence" value="ECO:0007669"/>
    <property type="project" value="UniProtKB-SubCell"/>
</dbReference>
<dbReference type="GO" id="GO:0003755">
    <property type="term" value="F:peptidyl-prolyl cis-trans isomerase activity"/>
    <property type="evidence" value="ECO:0007669"/>
    <property type="project" value="UniProtKB-UniRule"/>
</dbReference>
<dbReference type="GO" id="GO:0044183">
    <property type="term" value="F:protein folding chaperone"/>
    <property type="evidence" value="ECO:0007669"/>
    <property type="project" value="TreeGrafter"/>
</dbReference>
<dbReference type="GO" id="GO:0043022">
    <property type="term" value="F:ribosome binding"/>
    <property type="evidence" value="ECO:0007669"/>
    <property type="project" value="TreeGrafter"/>
</dbReference>
<dbReference type="GO" id="GO:0051083">
    <property type="term" value="P:'de novo' cotranslational protein folding"/>
    <property type="evidence" value="ECO:0007669"/>
    <property type="project" value="TreeGrafter"/>
</dbReference>
<dbReference type="GO" id="GO:0051301">
    <property type="term" value="P:cell division"/>
    <property type="evidence" value="ECO:0007669"/>
    <property type="project" value="UniProtKB-KW"/>
</dbReference>
<dbReference type="GO" id="GO:0061077">
    <property type="term" value="P:chaperone-mediated protein folding"/>
    <property type="evidence" value="ECO:0007669"/>
    <property type="project" value="TreeGrafter"/>
</dbReference>
<dbReference type="GO" id="GO:0015031">
    <property type="term" value="P:protein transport"/>
    <property type="evidence" value="ECO:0007669"/>
    <property type="project" value="UniProtKB-UniRule"/>
</dbReference>
<dbReference type="GO" id="GO:0043335">
    <property type="term" value="P:protein unfolding"/>
    <property type="evidence" value="ECO:0007669"/>
    <property type="project" value="TreeGrafter"/>
</dbReference>
<dbReference type="FunFam" id="3.10.50.40:FF:000019">
    <property type="entry name" value="Trigger factor"/>
    <property type="match status" value="1"/>
</dbReference>
<dbReference type="Gene3D" id="3.10.50.40">
    <property type="match status" value="1"/>
</dbReference>
<dbReference type="Gene3D" id="3.30.70.1050">
    <property type="entry name" value="Trigger factor ribosome-binding domain"/>
    <property type="match status" value="1"/>
</dbReference>
<dbReference type="Gene3D" id="1.10.3120.10">
    <property type="entry name" value="Trigger factor, C-terminal domain"/>
    <property type="match status" value="1"/>
</dbReference>
<dbReference type="HAMAP" id="MF_00303">
    <property type="entry name" value="Trigger_factor_Tig"/>
    <property type="match status" value="1"/>
</dbReference>
<dbReference type="InterPro" id="IPR046357">
    <property type="entry name" value="PPIase_dom_sf"/>
</dbReference>
<dbReference type="InterPro" id="IPR001179">
    <property type="entry name" value="PPIase_FKBP_dom"/>
</dbReference>
<dbReference type="InterPro" id="IPR005215">
    <property type="entry name" value="Trig_fac"/>
</dbReference>
<dbReference type="InterPro" id="IPR008880">
    <property type="entry name" value="Trigger_fac_C"/>
</dbReference>
<dbReference type="InterPro" id="IPR037041">
    <property type="entry name" value="Trigger_fac_C_sf"/>
</dbReference>
<dbReference type="InterPro" id="IPR008881">
    <property type="entry name" value="Trigger_fac_ribosome-bd_bac"/>
</dbReference>
<dbReference type="InterPro" id="IPR036611">
    <property type="entry name" value="Trigger_fac_ribosome-bd_sf"/>
</dbReference>
<dbReference type="InterPro" id="IPR027304">
    <property type="entry name" value="Trigger_fact/SurA_dom_sf"/>
</dbReference>
<dbReference type="NCBIfam" id="TIGR00115">
    <property type="entry name" value="tig"/>
    <property type="match status" value="1"/>
</dbReference>
<dbReference type="PANTHER" id="PTHR30560">
    <property type="entry name" value="TRIGGER FACTOR CHAPERONE AND PEPTIDYL-PROLYL CIS/TRANS ISOMERASE"/>
    <property type="match status" value="1"/>
</dbReference>
<dbReference type="PANTHER" id="PTHR30560:SF3">
    <property type="entry name" value="TRIGGER FACTOR-LIKE PROTEIN TIG, CHLOROPLASTIC"/>
    <property type="match status" value="1"/>
</dbReference>
<dbReference type="Pfam" id="PF00254">
    <property type="entry name" value="FKBP_C"/>
    <property type="match status" value="1"/>
</dbReference>
<dbReference type="Pfam" id="PF05698">
    <property type="entry name" value="Trigger_C"/>
    <property type="match status" value="1"/>
</dbReference>
<dbReference type="Pfam" id="PF05697">
    <property type="entry name" value="Trigger_N"/>
    <property type="match status" value="1"/>
</dbReference>
<dbReference type="PIRSF" id="PIRSF003095">
    <property type="entry name" value="Trigger_factor"/>
    <property type="match status" value="1"/>
</dbReference>
<dbReference type="SUPFAM" id="SSF54534">
    <property type="entry name" value="FKBP-like"/>
    <property type="match status" value="1"/>
</dbReference>
<dbReference type="SUPFAM" id="SSF109998">
    <property type="entry name" value="Triger factor/SurA peptide-binding domain-like"/>
    <property type="match status" value="1"/>
</dbReference>
<dbReference type="SUPFAM" id="SSF102735">
    <property type="entry name" value="Trigger factor ribosome-binding domain"/>
    <property type="match status" value="1"/>
</dbReference>
<dbReference type="PROSITE" id="PS50059">
    <property type="entry name" value="FKBP_PPIASE"/>
    <property type="match status" value="1"/>
</dbReference>
<feature type="chain" id="PRO_1000204997" description="Trigger factor">
    <location>
        <begin position="1"/>
        <end position="457"/>
    </location>
</feature>
<feature type="domain" description="PPIase FKBP-type" evidence="1">
    <location>
        <begin position="162"/>
        <end position="243"/>
    </location>
</feature>
<feature type="region of interest" description="Disordered" evidence="2">
    <location>
        <begin position="434"/>
        <end position="457"/>
    </location>
</feature>
<feature type="compositionally biased region" description="Acidic residues" evidence="2">
    <location>
        <begin position="440"/>
        <end position="457"/>
    </location>
</feature>
<comment type="function">
    <text evidence="1">Involved in protein export. Acts as a chaperone by maintaining the newly synthesized protein in an open conformation. Functions as a peptidyl-prolyl cis-trans isomerase.</text>
</comment>
<comment type="catalytic activity">
    <reaction evidence="1">
        <text>[protein]-peptidylproline (omega=180) = [protein]-peptidylproline (omega=0)</text>
        <dbReference type="Rhea" id="RHEA:16237"/>
        <dbReference type="Rhea" id="RHEA-COMP:10747"/>
        <dbReference type="Rhea" id="RHEA-COMP:10748"/>
        <dbReference type="ChEBI" id="CHEBI:83833"/>
        <dbReference type="ChEBI" id="CHEBI:83834"/>
        <dbReference type="EC" id="5.2.1.8"/>
    </reaction>
</comment>
<comment type="subcellular location">
    <subcellularLocation>
        <location>Cytoplasm</location>
    </subcellularLocation>
    <text evidence="1">About half TF is bound to the ribosome near the polypeptide exit tunnel while the other half is free in the cytoplasm.</text>
</comment>
<comment type="domain">
    <text evidence="1">Consists of 3 domains; the N-terminus binds the ribosome, the middle domain has PPIase activity, while the C-terminus has intrinsic chaperone activity on its own.</text>
</comment>
<comment type="similarity">
    <text evidence="1">Belongs to the FKBP-type PPIase family. Tig subfamily.</text>
</comment>
<gene>
    <name evidence="1" type="primary">tig</name>
    <name type="ordered locus">RER_38160</name>
</gene>
<protein>
    <recommendedName>
        <fullName evidence="1">Trigger factor</fullName>
        <shortName evidence="1">TF</shortName>
        <ecNumber evidence="1">5.2.1.8</ecNumber>
    </recommendedName>
    <alternativeName>
        <fullName evidence="1">PPIase</fullName>
    </alternativeName>
</protein>
<sequence>MKSTVEQLSPTRVRINVEVPFAELKSDFDKAYKALAQQIRLPGFRPGKAPARLLEARVGRGAVLEQVVNDALPSRYSEAVTSAGVKAIGQPEIEVTKIEDGELLEFTAEVDVRPEIELPDFSSINVEVDPIEITDEAIEEQLLSLRQRFGTLTGVDRAVEDGDFVSIDLSATVDGENVAEATASGLSHEVGSGQLIEGLDEAIIGLKAGESKDFTSTLVAGEYAGKEAVVTVTVQTVKERELPAEDDEFAQLASEFDTLEELKADLRERVARVRKVEQAGQIRDKVLEQLLETVEVPLPEAVVKAEVDAALHDAVHGLDHDEEALNKLLEEQGSSREEFDKDAQEAAERSVKTQLLLDSIADAGNVTVGQDELTERILFQAQRYGMAPEQFIQQIQQANQLGAVFADVRRGKALASVVESAGVKDTSGAVVDTAELFGSSEDETEADASDSAESEDK</sequence>
<reference key="1">
    <citation type="submission" date="2005-03" db="EMBL/GenBank/DDBJ databases">
        <title>Comparison of the complete genome sequences of Rhodococcus erythropolis PR4 and Rhodococcus opacus B4.</title>
        <authorList>
            <person name="Takarada H."/>
            <person name="Sekine M."/>
            <person name="Hosoyama A."/>
            <person name="Yamada R."/>
            <person name="Fujisawa T."/>
            <person name="Omata S."/>
            <person name="Shimizu A."/>
            <person name="Tsukatani N."/>
            <person name="Tanikawa S."/>
            <person name="Fujita N."/>
            <person name="Harayama S."/>
        </authorList>
    </citation>
    <scope>NUCLEOTIDE SEQUENCE [LARGE SCALE GENOMIC DNA]</scope>
    <source>
        <strain>PR4 / NBRC 100887</strain>
    </source>
</reference>